<accession>Q5HFT0</accession>
<comment type="function">
    <text evidence="2 5 7">Member of the two-component regulatory system SrrA/SrrB, which is involved in the global regulation of staphylococcal virulence factors in response to environmental oxygen levels as well as biofilm formation (PubMed:24222487). Also plays an essential role in host-derived nitric oxide resistance by regulating hmp/flavohemoglobin, an enzyme that detoxifies nitric oxide by converting it to nitrate (PubMed:16859493, PubMed:24222487). Functions as a transcription regulator by direct binding to promoter regions of target genes (By similarity).</text>
</comment>
<comment type="subcellular location">
    <subcellularLocation>
        <location evidence="1">Cytoplasm</location>
    </subcellularLocation>
</comment>
<comment type="induction">
    <text evidence="6">Up-regulated during anaerobic growth.</text>
</comment>
<comment type="PTM">
    <text evidence="1">Phosphorylated by SrrB.</text>
</comment>
<comment type="disruption phenotype">
    <text evidence="5 7">Inactivation significantly enhances staphylococcal nitric oxide susceptibility.</text>
</comment>
<keyword id="KW-0010">Activator</keyword>
<keyword id="KW-0963">Cytoplasm</keyword>
<keyword id="KW-0238">DNA-binding</keyword>
<keyword id="KW-0597">Phosphoprotein</keyword>
<keyword id="KW-0678">Repressor</keyword>
<keyword id="KW-0804">Transcription</keyword>
<keyword id="KW-0805">Transcription regulation</keyword>
<keyword id="KW-0902">Two-component regulatory system</keyword>
<gene>
    <name type="primary">srrA</name>
    <name type="ordered locus">SACOL1535</name>
</gene>
<organism>
    <name type="scientific">Staphylococcus aureus (strain COL)</name>
    <dbReference type="NCBI Taxonomy" id="93062"/>
    <lineage>
        <taxon>Bacteria</taxon>
        <taxon>Bacillati</taxon>
        <taxon>Bacillota</taxon>
        <taxon>Bacilli</taxon>
        <taxon>Bacillales</taxon>
        <taxon>Staphylococcaceae</taxon>
        <taxon>Staphylococcus</taxon>
    </lineage>
</organism>
<sequence>MSNEILIVDDEDRIRRLLKMYLERESFEIHEASNGQEAYELAMENNYACILLDLMLPEMDGIQVATKLREHKQTPIIMLTAKGEETNRVEGFESGADDYIVKPFSPREVVLRVKALLRRTQSTTVEQSEPHARDVIEFKHLEIDNDAHRVLADNQEVNLTPKEYELLIYLAKTPNKVFDREQLLKEVWHYEFYGDLRTVDTHVKRLREKLNRVSSEAAHMIQTVWGVGYKFEVKSNDEPAK</sequence>
<reference key="1">
    <citation type="journal article" date="2005" name="J. Bacteriol.">
        <title>Insights on evolution of virulence and resistance from the complete genome analysis of an early methicillin-resistant Staphylococcus aureus strain and a biofilm-producing methicillin-resistant Staphylococcus epidermidis strain.</title>
        <authorList>
            <person name="Gill S.R."/>
            <person name="Fouts D.E."/>
            <person name="Archer G.L."/>
            <person name="Mongodin E.F."/>
            <person name="DeBoy R.T."/>
            <person name="Ravel J."/>
            <person name="Paulsen I.T."/>
            <person name="Kolonay J.F."/>
            <person name="Brinkac L.M."/>
            <person name="Beanan M.J."/>
            <person name="Dodson R.J."/>
            <person name="Daugherty S.C."/>
            <person name="Madupu R."/>
            <person name="Angiuoli S.V."/>
            <person name="Durkin A.S."/>
            <person name="Haft D.H."/>
            <person name="Vamathevan J.J."/>
            <person name="Khouri H."/>
            <person name="Utterback T.R."/>
            <person name="Lee C."/>
            <person name="Dimitrov G."/>
            <person name="Jiang L."/>
            <person name="Qin H."/>
            <person name="Weidman J."/>
            <person name="Tran K."/>
            <person name="Kang K.H."/>
            <person name="Hance I.R."/>
            <person name="Nelson K.E."/>
            <person name="Fraser C.M."/>
        </authorList>
    </citation>
    <scope>NUCLEOTIDE SEQUENCE [LARGE SCALE GENOMIC DNA]</scope>
    <source>
        <strain>COL</strain>
    </source>
</reference>
<reference key="2">
    <citation type="journal article" date="2006" name="Mol. Microbiol.">
        <title>The nitrosative stress response of Staphylococcus aureus is required for resistance to innate immunity.</title>
        <authorList>
            <person name="Richardson A.R."/>
            <person name="Dunman P.M."/>
            <person name="Fang F.C."/>
        </authorList>
    </citation>
    <scope>FUNCTION</scope>
    <scope>DISRUPTION PHENOTYPE</scope>
</reference>
<reference key="3">
    <citation type="journal article" date="2007" name="J. Bacteriol.">
        <title>Anaerobic gene expression in Staphylococcus aureus.</title>
        <authorList>
            <person name="Fuchs S."/>
            <person name="Pane-Farre J."/>
            <person name="Kohler C."/>
            <person name="Hecker M."/>
            <person name="Engelmann S."/>
        </authorList>
    </citation>
    <scope>INDUCTION DURING ANAEROBIC GROWTH</scope>
</reference>
<reference key="4">
    <citation type="journal article" date="2013" name="MBio">
        <title>The Staphylococcus aureus SrrAB two-component system promotes resistance to nitrosative stress and hypoxia.</title>
        <authorList>
            <person name="Kinkel T.L."/>
            <person name="Roux C.M."/>
            <person name="Dunman P.M."/>
            <person name="Fang F.C."/>
        </authorList>
    </citation>
    <scope>FUNCTION</scope>
    <scope>DISRUPTION PHENOTYPE</scope>
</reference>
<evidence type="ECO:0000250" key="1"/>
<evidence type="ECO:0000250" key="2">
    <source>
        <dbReference type="UniProtKB" id="Q9L524"/>
    </source>
</evidence>
<evidence type="ECO:0000255" key="3">
    <source>
        <dbReference type="PROSITE-ProRule" id="PRU00169"/>
    </source>
</evidence>
<evidence type="ECO:0000255" key="4">
    <source>
        <dbReference type="PROSITE-ProRule" id="PRU01091"/>
    </source>
</evidence>
<evidence type="ECO:0000269" key="5">
    <source>
    </source>
</evidence>
<evidence type="ECO:0000269" key="6">
    <source>
    </source>
</evidence>
<evidence type="ECO:0000269" key="7">
    <source>
    </source>
</evidence>
<feature type="chain" id="PRO_0000081248" description="Transcriptional regulatory protein SrrA">
    <location>
        <begin position="1"/>
        <end position="241"/>
    </location>
</feature>
<feature type="domain" description="Response regulatory" evidence="3">
    <location>
        <begin position="4"/>
        <end position="117"/>
    </location>
</feature>
<feature type="DNA-binding region" description="OmpR/PhoB-type" evidence="4">
    <location>
        <begin position="133"/>
        <end position="233"/>
    </location>
</feature>
<feature type="modified residue" description="4-aspartylphosphate" evidence="3">
    <location>
        <position position="53"/>
    </location>
</feature>
<protein>
    <recommendedName>
        <fullName>Transcriptional regulatory protein SrrA</fullName>
    </recommendedName>
    <alternativeName>
        <fullName>Staphylococcal respiratory response protein A</fullName>
    </alternativeName>
</protein>
<dbReference type="EMBL" id="CP000046">
    <property type="protein sequence ID" value="AAW36728.1"/>
    <property type="molecule type" value="Genomic_DNA"/>
</dbReference>
<dbReference type="RefSeq" id="WP_000064078.1">
    <property type="nucleotide sequence ID" value="NZ_JBGOFO010000003.1"/>
</dbReference>
<dbReference type="SMR" id="Q5HFT0"/>
<dbReference type="GeneID" id="98345856"/>
<dbReference type="KEGG" id="sac:SACOL1535"/>
<dbReference type="HOGENOM" id="CLU_000445_30_4_9"/>
<dbReference type="PHI-base" id="PHI:10534"/>
<dbReference type="Proteomes" id="UP000000530">
    <property type="component" value="Chromosome"/>
</dbReference>
<dbReference type="GO" id="GO:0005829">
    <property type="term" value="C:cytosol"/>
    <property type="evidence" value="ECO:0007669"/>
    <property type="project" value="TreeGrafter"/>
</dbReference>
<dbReference type="GO" id="GO:0032993">
    <property type="term" value="C:protein-DNA complex"/>
    <property type="evidence" value="ECO:0007669"/>
    <property type="project" value="TreeGrafter"/>
</dbReference>
<dbReference type="GO" id="GO:0000156">
    <property type="term" value="F:phosphorelay response regulator activity"/>
    <property type="evidence" value="ECO:0007669"/>
    <property type="project" value="TreeGrafter"/>
</dbReference>
<dbReference type="GO" id="GO:0000976">
    <property type="term" value="F:transcription cis-regulatory region binding"/>
    <property type="evidence" value="ECO:0007669"/>
    <property type="project" value="TreeGrafter"/>
</dbReference>
<dbReference type="GO" id="GO:0006355">
    <property type="term" value="P:regulation of DNA-templated transcription"/>
    <property type="evidence" value="ECO:0007669"/>
    <property type="project" value="InterPro"/>
</dbReference>
<dbReference type="CDD" id="cd17574">
    <property type="entry name" value="REC_OmpR"/>
    <property type="match status" value="1"/>
</dbReference>
<dbReference type="CDD" id="cd00383">
    <property type="entry name" value="trans_reg_C"/>
    <property type="match status" value="1"/>
</dbReference>
<dbReference type="FunFam" id="3.40.50.2300:FF:000001">
    <property type="entry name" value="DNA-binding response regulator PhoB"/>
    <property type="match status" value="1"/>
</dbReference>
<dbReference type="FunFam" id="1.10.10.10:FF:000018">
    <property type="entry name" value="DNA-binding response regulator ResD"/>
    <property type="match status" value="1"/>
</dbReference>
<dbReference type="Gene3D" id="3.40.50.2300">
    <property type="match status" value="1"/>
</dbReference>
<dbReference type="Gene3D" id="6.10.250.690">
    <property type="match status" value="1"/>
</dbReference>
<dbReference type="Gene3D" id="1.10.10.10">
    <property type="entry name" value="Winged helix-like DNA-binding domain superfamily/Winged helix DNA-binding domain"/>
    <property type="match status" value="1"/>
</dbReference>
<dbReference type="InterPro" id="IPR011006">
    <property type="entry name" value="CheY-like_superfamily"/>
</dbReference>
<dbReference type="InterPro" id="IPR001867">
    <property type="entry name" value="OmpR/PhoB-type_DNA-bd"/>
</dbReference>
<dbReference type="InterPro" id="IPR001789">
    <property type="entry name" value="Sig_transdc_resp-reg_receiver"/>
</dbReference>
<dbReference type="InterPro" id="IPR039420">
    <property type="entry name" value="WalR-like"/>
</dbReference>
<dbReference type="InterPro" id="IPR036388">
    <property type="entry name" value="WH-like_DNA-bd_sf"/>
</dbReference>
<dbReference type="PANTHER" id="PTHR48111">
    <property type="entry name" value="REGULATOR OF RPOS"/>
    <property type="match status" value="1"/>
</dbReference>
<dbReference type="PANTHER" id="PTHR48111:SF44">
    <property type="entry name" value="TRANSCRIPTIONAL REGULATORY PROTEIN RESD"/>
    <property type="match status" value="1"/>
</dbReference>
<dbReference type="Pfam" id="PF00072">
    <property type="entry name" value="Response_reg"/>
    <property type="match status" value="1"/>
</dbReference>
<dbReference type="Pfam" id="PF00486">
    <property type="entry name" value="Trans_reg_C"/>
    <property type="match status" value="1"/>
</dbReference>
<dbReference type="SMART" id="SM00448">
    <property type="entry name" value="REC"/>
    <property type="match status" value="1"/>
</dbReference>
<dbReference type="SMART" id="SM00862">
    <property type="entry name" value="Trans_reg_C"/>
    <property type="match status" value="1"/>
</dbReference>
<dbReference type="SUPFAM" id="SSF52172">
    <property type="entry name" value="CheY-like"/>
    <property type="match status" value="1"/>
</dbReference>
<dbReference type="PROSITE" id="PS51755">
    <property type="entry name" value="OMPR_PHOB"/>
    <property type="match status" value="1"/>
</dbReference>
<dbReference type="PROSITE" id="PS50110">
    <property type="entry name" value="RESPONSE_REGULATORY"/>
    <property type="match status" value="1"/>
</dbReference>
<name>SRRA_STAAC</name>
<proteinExistence type="evidence at transcript level"/>